<proteinExistence type="inferred from homology"/>
<comment type="function">
    <text evidence="1">Molecular chaperone capable of stabilizing a range of proteins. Seems to fulfill an ATP-independent, HSP70-like function in archaeal de novo protein folding (By similarity).</text>
</comment>
<comment type="subunit">
    <text evidence="1">Heterohexamer of two alpha and four beta subunits.</text>
</comment>
<comment type="subcellular location">
    <subcellularLocation>
        <location evidence="1">Cytoplasm</location>
    </subcellularLocation>
</comment>
<comment type="similarity">
    <text evidence="2">Belongs to the prefoldin subunit beta family.</text>
</comment>
<evidence type="ECO:0000250" key="1"/>
<evidence type="ECO:0000305" key="2"/>
<accession>Q8TJD5</accession>
<protein>
    <recommendedName>
        <fullName>Prefoldin subunit beta</fullName>
    </recommendedName>
    <alternativeName>
        <fullName>GimC subunit beta</fullName>
    </alternativeName>
</protein>
<organism>
    <name type="scientific">Methanosarcina acetivorans (strain ATCC 35395 / DSM 2834 / JCM 12185 / C2A)</name>
    <dbReference type="NCBI Taxonomy" id="188937"/>
    <lineage>
        <taxon>Archaea</taxon>
        <taxon>Methanobacteriati</taxon>
        <taxon>Methanobacteriota</taxon>
        <taxon>Stenosarchaea group</taxon>
        <taxon>Methanomicrobia</taxon>
        <taxon>Methanosarcinales</taxon>
        <taxon>Methanosarcinaceae</taxon>
        <taxon>Methanosarcina</taxon>
    </lineage>
</organism>
<feature type="chain" id="PRO_0000124859" description="Prefoldin subunit beta">
    <location>
        <begin position="1"/>
        <end position="117"/>
    </location>
</feature>
<gene>
    <name type="primary">pfdB</name>
    <name type="ordered locus">MA_3850</name>
</gene>
<keyword id="KW-0143">Chaperone</keyword>
<keyword id="KW-0963">Cytoplasm</keyword>
<keyword id="KW-1185">Reference proteome</keyword>
<reference key="1">
    <citation type="journal article" date="2002" name="Genome Res.">
        <title>The genome of Methanosarcina acetivorans reveals extensive metabolic and physiological diversity.</title>
        <authorList>
            <person name="Galagan J.E."/>
            <person name="Nusbaum C."/>
            <person name="Roy A."/>
            <person name="Endrizzi M.G."/>
            <person name="Macdonald P."/>
            <person name="FitzHugh W."/>
            <person name="Calvo S."/>
            <person name="Engels R."/>
            <person name="Smirnov S."/>
            <person name="Atnoor D."/>
            <person name="Brown A."/>
            <person name="Allen N."/>
            <person name="Naylor J."/>
            <person name="Stange-Thomann N."/>
            <person name="DeArellano K."/>
            <person name="Johnson R."/>
            <person name="Linton L."/>
            <person name="McEwan P."/>
            <person name="McKernan K."/>
            <person name="Talamas J."/>
            <person name="Tirrell A."/>
            <person name="Ye W."/>
            <person name="Zimmer A."/>
            <person name="Barber R.D."/>
            <person name="Cann I."/>
            <person name="Graham D.E."/>
            <person name="Grahame D.A."/>
            <person name="Guss A.M."/>
            <person name="Hedderich R."/>
            <person name="Ingram-Smith C."/>
            <person name="Kuettner H.C."/>
            <person name="Krzycki J.A."/>
            <person name="Leigh J.A."/>
            <person name="Li W."/>
            <person name="Liu J."/>
            <person name="Mukhopadhyay B."/>
            <person name="Reeve J.N."/>
            <person name="Smith K."/>
            <person name="Springer T.A."/>
            <person name="Umayam L.A."/>
            <person name="White O."/>
            <person name="White R.H."/>
            <person name="de Macario E.C."/>
            <person name="Ferry J.G."/>
            <person name="Jarrell K.F."/>
            <person name="Jing H."/>
            <person name="Macario A.J.L."/>
            <person name="Paulsen I.T."/>
            <person name="Pritchett M."/>
            <person name="Sowers K.R."/>
            <person name="Swanson R.V."/>
            <person name="Zinder S.H."/>
            <person name="Lander E."/>
            <person name="Metcalf W.W."/>
            <person name="Birren B."/>
        </authorList>
    </citation>
    <scope>NUCLEOTIDE SEQUENCE [LARGE SCALE GENOMIC DNA]</scope>
    <source>
        <strain>ATCC 35395 / DSM 2834 / JCM 12185 / C2A</strain>
    </source>
</reference>
<sequence length="117" mass="13435">MTSELPPQIQNQIAQLQQVQQQVQALAMQKSQIEAMQKESKMALEELEKLADDAVVYRNVGELVIKTSKEESVSKLKDREETLSLRLQSISRQEERLTTRFKQLQEQIQQALGPKAQ</sequence>
<dbReference type="EMBL" id="AE010299">
    <property type="protein sequence ID" value="AAM07201.1"/>
    <property type="molecule type" value="Genomic_DNA"/>
</dbReference>
<dbReference type="RefSeq" id="WP_011023749.1">
    <property type="nucleotide sequence ID" value="NC_003552.1"/>
</dbReference>
<dbReference type="SMR" id="Q8TJD5"/>
<dbReference type="STRING" id="188937.MA_3850"/>
<dbReference type="EnsemblBacteria" id="AAM07201">
    <property type="protein sequence ID" value="AAM07201"/>
    <property type="gene ID" value="MA_3850"/>
</dbReference>
<dbReference type="GeneID" id="1475743"/>
<dbReference type="KEGG" id="mac:MA_3850"/>
<dbReference type="HOGENOM" id="CLU_131909_2_1_2"/>
<dbReference type="InParanoid" id="Q8TJD5"/>
<dbReference type="OrthoDB" id="204796at2157"/>
<dbReference type="PhylomeDB" id="Q8TJD5"/>
<dbReference type="Proteomes" id="UP000002487">
    <property type="component" value="Chromosome"/>
</dbReference>
<dbReference type="GO" id="GO:0005737">
    <property type="term" value="C:cytoplasm"/>
    <property type="evidence" value="ECO:0000318"/>
    <property type="project" value="GO_Central"/>
</dbReference>
<dbReference type="GO" id="GO:0016272">
    <property type="term" value="C:prefoldin complex"/>
    <property type="evidence" value="ECO:0007669"/>
    <property type="project" value="UniProtKB-UniRule"/>
</dbReference>
<dbReference type="GO" id="GO:0044183">
    <property type="term" value="F:protein folding chaperone"/>
    <property type="evidence" value="ECO:0000318"/>
    <property type="project" value="GO_Central"/>
</dbReference>
<dbReference type="GO" id="GO:0051082">
    <property type="term" value="F:unfolded protein binding"/>
    <property type="evidence" value="ECO:0000318"/>
    <property type="project" value="GO_Central"/>
</dbReference>
<dbReference type="GO" id="GO:0006457">
    <property type="term" value="P:protein folding"/>
    <property type="evidence" value="ECO:0000318"/>
    <property type="project" value="GO_Central"/>
</dbReference>
<dbReference type="CDD" id="cd23162">
    <property type="entry name" value="Prefoldin_beta_GimC"/>
    <property type="match status" value="1"/>
</dbReference>
<dbReference type="Gene3D" id="1.10.287.370">
    <property type="match status" value="1"/>
</dbReference>
<dbReference type="HAMAP" id="MF_00307">
    <property type="entry name" value="PfdB"/>
    <property type="match status" value="1"/>
</dbReference>
<dbReference type="InterPro" id="IPR002777">
    <property type="entry name" value="PFD_beta-like"/>
</dbReference>
<dbReference type="InterPro" id="IPR012713">
    <property type="entry name" value="PfdB"/>
</dbReference>
<dbReference type="InterPro" id="IPR009053">
    <property type="entry name" value="Prefoldin"/>
</dbReference>
<dbReference type="NCBIfam" id="TIGR02338">
    <property type="entry name" value="gimC_beta"/>
    <property type="match status" value="1"/>
</dbReference>
<dbReference type="PANTHER" id="PTHR20903:SF0">
    <property type="entry name" value="PREFOLDIN SUBUNIT 1"/>
    <property type="match status" value="1"/>
</dbReference>
<dbReference type="PANTHER" id="PTHR20903">
    <property type="entry name" value="PREFOLDIN SUBUNIT 1-RELATED"/>
    <property type="match status" value="1"/>
</dbReference>
<dbReference type="Pfam" id="PF01920">
    <property type="entry name" value="Prefoldin_2"/>
    <property type="match status" value="1"/>
</dbReference>
<dbReference type="SUPFAM" id="SSF46579">
    <property type="entry name" value="Prefoldin"/>
    <property type="match status" value="1"/>
</dbReference>
<name>PFDB_METAC</name>